<protein>
    <recommendedName>
        <fullName>High-affinity heme uptake system protein IsdE</fullName>
    </recommendedName>
    <alternativeName>
        <fullName>Iron-regulated surface determinant protein E</fullName>
    </alternativeName>
    <alternativeName>
        <fullName>Staphylococcal iron-regulated protein F</fullName>
    </alternativeName>
</protein>
<proteinExistence type="inferred from homology"/>
<gene>
    <name type="primary">isdE</name>
    <name type="synonym">sirF</name>
    <name type="ordered locus">SAUSA300_1032</name>
</gene>
<dbReference type="EMBL" id="CP000255">
    <property type="protein sequence ID" value="ABD20741.1"/>
    <property type="status" value="ALT_INIT"/>
    <property type="molecule type" value="Genomic_DNA"/>
</dbReference>
<dbReference type="RefSeq" id="WP_001220199.1">
    <property type="nucleotide sequence ID" value="NZ_CP027476.1"/>
</dbReference>
<dbReference type="SMR" id="Q2FHU8"/>
<dbReference type="KEGG" id="saa:SAUSA300_1032"/>
<dbReference type="HOGENOM" id="CLU_038034_2_3_9"/>
<dbReference type="OMA" id="IWKHFNA"/>
<dbReference type="Proteomes" id="UP000001939">
    <property type="component" value="Chromosome"/>
</dbReference>
<dbReference type="GO" id="GO:0005886">
    <property type="term" value="C:plasma membrane"/>
    <property type="evidence" value="ECO:0007669"/>
    <property type="project" value="UniProtKB-SubCell"/>
</dbReference>
<dbReference type="GO" id="GO:0020037">
    <property type="term" value="F:heme binding"/>
    <property type="evidence" value="ECO:0007669"/>
    <property type="project" value="InterPro"/>
</dbReference>
<dbReference type="GO" id="GO:0046872">
    <property type="term" value="F:metal ion binding"/>
    <property type="evidence" value="ECO:0007669"/>
    <property type="project" value="UniProtKB-KW"/>
</dbReference>
<dbReference type="GO" id="GO:0071281">
    <property type="term" value="P:cellular response to iron ion"/>
    <property type="evidence" value="ECO:0007669"/>
    <property type="project" value="TreeGrafter"/>
</dbReference>
<dbReference type="GO" id="GO:0015886">
    <property type="term" value="P:heme transport"/>
    <property type="evidence" value="ECO:0007669"/>
    <property type="project" value="InterPro"/>
</dbReference>
<dbReference type="FunFam" id="3.40.50.1980:FF:000022">
    <property type="entry name" value="Heme ABC transporter substrate-binding protein IsdE"/>
    <property type="match status" value="1"/>
</dbReference>
<dbReference type="FunFam" id="3.40.50.1980:FF:000031">
    <property type="entry name" value="High-affinity heme uptake system protein IsdE"/>
    <property type="match status" value="1"/>
</dbReference>
<dbReference type="Gene3D" id="3.40.50.1980">
    <property type="entry name" value="Nitrogenase molybdenum iron protein domain"/>
    <property type="match status" value="2"/>
</dbReference>
<dbReference type="InterPro" id="IPR050902">
    <property type="entry name" value="ABC_Transporter_SBP"/>
</dbReference>
<dbReference type="InterPro" id="IPR019957">
    <property type="entry name" value="ABC_transptr_haem-bd_IsdE"/>
</dbReference>
<dbReference type="InterPro" id="IPR002491">
    <property type="entry name" value="ABC_transptr_periplasmic_BD"/>
</dbReference>
<dbReference type="NCBIfam" id="TIGR03659">
    <property type="entry name" value="IsdE"/>
    <property type="match status" value="1"/>
</dbReference>
<dbReference type="PANTHER" id="PTHR30535:SF36">
    <property type="entry name" value="HIGH-AFFINITY HEME UPTAKE SYSTEM PROTEIN ISDE"/>
    <property type="match status" value="1"/>
</dbReference>
<dbReference type="PANTHER" id="PTHR30535">
    <property type="entry name" value="VITAMIN B12-BINDING PROTEIN"/>
    <property type="match status" value="1"/>
</dbReference>
<dbReference type="Pfam" id="PF01497">
    <property type="entry name" value="Peripla_BP_2"/>
    <property type="match status" value="1"/>
</dbReference>
<dbReference type="SUPFAM" id="SSF53807">
    <property type="entry name" value="Helical backbone' metal receptor"/>
    <property type="match status" value="1"/>
</dbReference>
<dbReference type="PROSITE" id="PS50983">
    <property type="entry name" value="FE_B12_PBP"/>
    <property type="match status" value="1"/>
</dbReference>
<dbReference type="PROSITE" id="PS51257">
    <property type="entry name" value="PROKAR_LIPOPROTEIN"/>
    <property type="match status" value="1"/>
</dbReference>
<organism>
    <name type="scientific">Staphylococcus aureus (strain USA300)</name>
    <dbReference type="NCBI Taxonomy" id="367830"/>
    <lineage>
        <taxon>Bacteria</taxon>
        <taxon>Bacillati</taxon>
        <taxon>Bacillota</taxon>
        <taxon>Bacilli</taxon>
        <taxon>Bacillales</taxon>
        <taxon>Staphylococcaceae</taxon>
        <taxon>Staphylococcus</taxon>
    </lineage>
</organism>
<evidence type="ECO:0000250" key="1"/>
<evidence type="ECO:0000255" key="2">
    <source>
        <dbReference type="PROSITE-ProRule" id="PRU00303"/>
    </source>
</evidence>
<evidence type="ECO:0000255" key="3">
    <source>
        <dbReference type="PROSITE-ProRule" id="PRU00344"/>
    </source>
</evidence>
<evidence type="ECO:0000305" key="4"/>
<feature type="signal peptide" evidence="2">
    <location>
        <begin position="1"/>
        <end position="19"/>
    </location>
</feature>
<feature type="chain" id="PRO_0000326217" description="High-affinity heme uptake system protein IsdE">
    <location>
        <begin position="20"/>
        <end position="292"/>
    </location>
</feature>
<feature type="domain" description="Fe/B12 periplasmic-binding" evidence="3">
    <location>
        <begin position="35"/>
        <end position="291"/>
    </location>
</feature>
<feature type="binding site" evidence="1">
    <location>
        <position position="41"/>
    </location>
    <ligand>
        <name>heme</name>
        <dbReference type="ChEBI" id="CHEBI:30413"/>
    </ligand>
</feature>
<feature type="binding site" evidence="1">
    <location>
        <position position="42"/>
    </location>
    <ligand>
        <name>heme</name>
        <dbReference type="ChEBI" id="CHEBI:30413"/>
    </ligand>
</feature>
<feature type="binding site" evidence="1">
    <location>
        <position position="60"/>
    </location>
    <ligand>
        <name>heme</name>
        <dbReference type="ChEBI" id="CHEBI:30413"/>
    </ligand>
</feature>
<feature type="binding site" evidence="1">
    <location>
        <position position="61"/>
    </location>
    <ligand>
        <name>heme</name>
        <dbReference type="ChEBI" id="CHEBI:30413"/>
    </ligand>
</feature>
<feature type="binding site" description="axial binding residue" evidence="1">
    <location>
        <position position="78"/>
    </location>
    <ligand>
        <name>heme</name>
        <dbReference type="ChEBI" id="CHEBI:30413"/>
    </ligand>
    <ligandPart>
        <name>Fe</name>
        <dbReference type="ChEBI" id="CHEBI:18248"/>
    </ligandPart>
</feature>
<feature type="binding site" description="axial binding residue" evidence="1">
    <location>
        <position position="229"/>
    </location>
    <ligand>
        <name>heme</name>
        <dbReference type="ChEBI" id="CHEBI:30413"/>
    </ligand>
    <ligandPart>
        <name>Fe</name>
        <dbReference type="ChEBI" id="CHEBI:18248"/>
    </ligandPart>
</feature>
<feature type="lipid moiety-binding region" description="N-palmitoyl cysteine" evidence="2">
    <location>
        <position position="20"/>
    </location>
</feature>
<feature type="lipid moiety-binding region" description="S-diacylglycerol cysteine" evidence="2">
    <location>
        <position position="20"/>
    </location>
</feature>
<keyword id="KW-1003">Cell membrane</keyword>
<keyword id="KW-0349">Heme</keyword>
<keyword id="KW-0408">Iron</keyword>
<keyword id="KW-0449">Lipoprotein</keyword>
<keyword id="KW-0472">Membrane</keyword>
<keyword id="KW-0479">Metal-binding</keyword>
<keyword id="KW-0564">Palmitate</keyword>
<keyword id="KW-0732">Signal</keyword>
<keyword id="KW-0813">Transport</keyword>
<name>ISDE_STAA3</name>
<reference key="1">
    <citation type="journal article" date="2006" name="Lancet">
        <title>Complete genome sequence of USA300, an epidemic clone of community-acquired meticillin-resistant Staphylococcus aureus.</title>
        <authorList>
            <person name="Diep B.A."/>
            <person name="Gill S.R."/>
            <person name="Chang R.F."/>
            <person name="Phan T.H."/>
            <person name="Chen J.H."/>
            <person name="Davidson M.G."/>
            <person name="Lin F."/>
            <person name="Lin J."/>
            <person name="Carleton H.A."/>
            <person name="Mongodin E.F."/>
            <person name="Sensabaugh G.F."/>
            <person name="Perdreau-Remington F."/>
        </authorList>
    </citation>
    <scope>NUCLEOTIDE SEQUENCE [LARGE SCALE GENOMIC DNA]</scope>
    <source>
        <strain>USA300</strain>
    </source>
</reference>
<accession>Q2FHU8</accession>
<sequence>MRIIKYLTILVISVVILTSCQSSSSQESTKSGEFRIVPTTVALTMTLDKLDLPIVGKPTSYKTLPNRYKDVPEIGQPMEPNVEAVKKLKPTHVLSVSTIKDEMQPFYKQLNMKGYFYDFDSLKGMQKSITQLGDQFNRKAQAKELNDHLNSVKQKIENKAAKQKKHPKVLILMGVPGSYLVATDKSYIGDLVKIAGGENVIKVKDRQYISSNTENLLNINPDIILRLPHGMPEEVKKMFQKEFKQNDIWKHFKAVKNNHVYDLEEVPFGITANVDADKAMTQLYDLFYKDKK</sequence>
<comment type="function">
    <text evidence="1">Involved in heme (porphyrin) scavenging. Binds Fe(2+) and Fe(3+) heme but the largest fraction is Fe(2+) heme. Functions as a high-affinity heme binding protein and probably has a role in relaying heme-iron from cell wall-anchored isd proteins receptors to the probable permease IsdF (By similarity).</text>
</comment>
<comment type="cofactor">
    <cofactor evidence="1">
        <name>heme b</name>
        <dbReference type="ChEBI" id="CHEBI:60344"/>
    </cofactor>
    <text evidence="1">Binds 1 heme b (iron(II)-protoporphyrin IX) group per subunit.</text>
</comment>
<comment type="subcellular location">
    <subcellularLocation>
        <location evidence="2">Cell membrane</location>
        <topology evidence="2">Lipid-anchor</topology>
    </subcellularLocation>
</comment>
<comment type="induction">
    <text evidence="1">Repressed by fur in the presence of iron.</text>
</comment>
<comment type="similarity">
    <text evidence="4">Belongs to the bacterial solute-binding protein 8 family.</text>
</comment>
<comment type="sequence caution" evidence="4">
    <conflict type="erroneous initiation">
        <sequence resource="EMBL-CDS" id="ABD20741"/>
    </conflict>
</comment>